<feature type="chain" id="PRO_1000191134" description="Adenylate kinase">
    <location>
        <begin position="1"/>
        <end position="217"/>
    </location>
</feature>
<feature type="region of interest" description="NMP" evidence="1">
    <location>
        <begin position="30"/>
        <end position="59"/>
    </location>
</feature>
<feature type="region of interest" description="LID" evidence="1">
    <location>
        <begin position="126"/>
        <end position="163"/>
    </location>
</feature>
<feature type="binding site" evidence="1">
    <location>
        <begin position="10"/>
        <end position="15"/>
    </location>
    <ligand>
        <name>ATP</name>
        <dbReference type="ChEBI" id="CHEBI:30616"/>
    </ligand>
</feature>
<feature type="binding site" evidence="1">
    <location>
        <position position="31"/>
    </location>
    <ligand>
        <name>AMP</name>
        <dbReference type="ChEBI" id="CHEBI:456215"/>
    </ligand>
</feature>
<feature type="binding site" evidence="1">
    <location>
        <position position="36"/>
    </location>
    <ligand>
        <name>AMP</name>
        <dbReference type="ChEBI" id="CHEBI:456215"/>
    </ligand>
</feature>
<feature type="binding site" evidence="1">
    <location>
        <begin position="57"/>
        <end position="59"/>
    </location>
    <ligand>
        <name>AMP</name>
        <dbReference type="ChEBI" id="CHEBI:456215"/>
    </ligand>
</feature>
<feature type="binding site" evidence="1">
    <location>
        <begin position="85"/>
        <end position="88"/>
    </location>
    <ligand>
        <name>AMP</name>
        <dbReference type="ChEBI" id="CHEBI:456215"/>
    </ligand>
</feature>
<feature type="binding site" evidence="1">
    <location>
        <position position="92"/>
    </location>
    <ligand>
        <name>AMP</name>
        <dbReference type="ChEBI" id="CHEBI:456215"/>
    </ligand>
</feature>
<feature type="binding site" evidence="1">
    <location>
        <position position="127"/>
    </location>
    <ligand>
        <name>ATP</name>
        <dbReference type="ChEBI" id="CHEBI:30616"/>
    </ligand>
</feature>
<feature type="binding site" evidence="1">
    <location>
        <position position="130"/>
    </location>
    <ligand>
        <name>Zn(2+)</name>
        <dbReference type="ChEBI" id="CHEBI:29105"/>
        <note>structural</note>
    </ligand>
</feature>
<feature type="binding site" evidence="1">
    <location>
        <position position="133"/>
    </location>
    <ligand>
        <name>Zn(2+)</name>
        <dbReference type="ChEBI" id="CHEBI:29105"/>
        <note>structural</note>
    </ligand>
</feature>
<feature type="binding site" evidence="1">
    <location>
        <begin position="136"/>
        <end position="137"/>
    </location>
    <ligand>
        <name>ATP</name>
        <dbReference type="ChEBI" id="CHEBI:30616"/>
    </ligand>
</feature>
<feature type="binding site" evidence="1">
    <location>
        <position position="150"/>
    </location>
    <ligand>
        <name>Zn(2+)</name>
        <dbReference type="ChEBI" id="CHEBI:29105"/>
        <note>structural</note>
    </ligand>
</feature>
<feature type="binding site" evidence="1">
    <location>
        <position position="153"/>
    </location>
    <ligand>
        <name>Zn(2+)</name>
        <dbReference type="ChEBI" id="CHEBI:29105"/>
        <note>structural</note>
    </ligand>
</feature>
<feature type="binding site" evidence="1">
    <location>
        <position position="160"/>
    </location>
    <ligand>
        <name>AMP</name>
        <dbReference type="ChEBI" id="CHEBI:456215"/>
    </ligand>
</feature>
<feature type="binding site" evidence="1">
    <location>
        <position position="171"/>
    </location>
    <ligand>
        <name>AMP</name>
        <dbReference type="ChEBI" id="CHEBI:456215"/>
    </ligand>
</feature>
<feature type="binding site" evidence="1">
    <location>
        <position position="199"/>
    </location>
    <ligand>
        <name>ATP</name>
        <dbReference type="ChEBI" id="CHEBI:30616"/>
    </ligand>
</feature>
<reference key="1">
    <citation type="submission" date="2005-09" db="EMBL/GenBank/DDBJ databases">
        <title>Complete genome sequence of Clostridium kluyveri and comparative genomics of Clostridia species.</title>
        <authorList>
            <person name="Inui M."/>
            <person name="Nonaka H."/>
            <person name="Shinoda Y."/>
            <person name="Ikenaga Y."/>
            <person name="Abe M."/>
            <person name="Naito K."/>
            <person name="Vertes A.A."/>
            <person name="Yukawa H."/>
        </authorList>
    </citation>
    <scope>NUCLEOTIDE SEQUENCE [LARGE SCALE GENOMIC DNA]</scope>
    <source>
        <strain>NBRC 12016</strain>
    </source>
</reference>
<comment type="function">
    <text evidence="1">Catalyzes the reversible transfer of the terminal phosphate group between ATP and AMP. Plays an important role in cellular energy homeostasis and in adenine nucleotide metabolism.</text>
</comment>
<comment type="catalytic activity">
    <reaction evidence="1">
        <text>AMP + ATP = 2 ADP</text>
        <dbReference type="Rhea" id="RHEA:12973"/>
        <dbReference type="ChEBI" id="CHEBI:30616"/>
        <dbReference type="ChEBI" id="CHEBI:456215"/>
        <dbReference type="ChEBI" id="CHEBI:456216"/>
        <dbReference type="EC" id="2.7.4.3"/>
    </reaction>
</comment>
<comment type="pathway">
    <text evidence="1">Purine metabolism; AMP biosynthesis via salvage pathway; AMP from ADP: step 1/1.</text>
</comment>
<comment type="subunit">
    <text evidence="1">Monomer.</text>
</comment>
<comment type="subcellular location">
    <subcellularLocation>
        <location evidence="1">Cytoplasm</location>
    </subcellularLocation>
</comment>
<comment type="domain">
    <text evidence="1">Consists of three domains, a large central CORE domain and two small peripheral domains, NMPbind and LID, which undergo movements during catalysis. The LID domain closes over the site of phosphoryl transfer upon ATP binding. Assembling and dissambling the active center during each catalytic cycle provides an effective means to prevent ATP hydrolysis. Some bacteria have evolved a zinc-coordinating structure that stabilizes the LID domain.</text>
</comment>
<comment type="similarity">
    <text evidence="1">Belongs to the adenylate kinase family.</text>
</comment>
<accession>B9DYD0</accession>
<protein>
    <recommendedName>
        <fullName evidence="1">Adenylate kinase</fullName>
        <shortName evidence="1">AK</shortName>
        <ecNumber evidence="1">2.7.4.3</ecNumber>
    </recommendedName>
    <alternativeName>
        <fullName evidence="1">ATP-AMP transphosphorylase</fullName>
    </alternativeName>
    <alternativeName>
        <fullName evidence="1">ATP:AMP phosphotransferase</fullName>
    </alternativeName>
    <alternativeName>
        <fullName evidence="1">Adenylate monophosphate kinase</fullName>
    </alternativeName>
</protein>
<sequence>MKIILLGPPGAGKGTQAKFISEEYSIPHISTGDIFRKNISDKTPLGIEAKEYLDKGQLVPDEVTINIVKDRLSEDDCESGFLLDGFPRTVYQAEALDSFLNANDNKIDMVLLIDVPRELIFDRMTGRRICPSCGASYHVKFNPPKLKDKCDICNNDIIQRKDDTESTVKDRLDVYEKQTEPLINYYKKQGVISTIEGSGEINQVFQRAKSALGAVCK</sequence>
<proteinExistence type="inferred from homology"/>
<name>KAD_CLOK1</name>
<evidence type="ECO:0000255" key="1">
    <source>
        <dbReference type="HAMAP-Rule" id="MF_00235"/>
    </source>
</evidence>
<gene>
    <name evidence="1" type="primary">adk</name>
    <name type="ordered locus">CKR_0204</name>
</gene>
<organism>
    <name type="scientific">Clostridium kluyveri (strain NBRC 12016)</name>
    <dbReference type="NCBI Taxonomy" id="583346"/>
    <lineage>
        <taxon>Bacteria</taxon>
        <taxon>Bacillati</taxon>
        <taxon>Bacillota</taxon>
        <taxon>Clostridia</taxon>
        <taxon>Eubacteriales</taxon>
        <taxon>Clostridiaceae</taxon>
        <taxon>Clostridium</taxon>
    </lineage>
</organism>
<keyword id="KW-0067">ATP-binding</keyword>
<keyword id="KW-0963">Cytoplasm</keyword>
<keyword id="KW-0418">Kinase</keyword>
<keyword id="KW-0479">Metal-binding</keyword>
<keyword id="KW-0545">Nucleotide biosynthesis</keyword>
<keyword id="KW-0547">Nucleotide-binding</keyword>
<keyword id="KW-0808">Transferase</keyword>
<keyword id="KW-0862">Zinc</keyword>
<dbReference type="EC" id="2.7.4.3" evidence="1"/>
<dbReference type="EMBL" id="AP009049">
    <property type="protein sequence ID" value="BAH05255.1"/>
    <property type="molecule type" value="Genomic_DNA"/>
</dbReference>
<dbReference type="RefSeq" id="WP_011988824.1">
    <property type="nucleotide sequence ID" value="NC_011837.1"/>
</dbReference>
<dbReference type="SMR" id="B9DYD0"/>
<dbReference type="KEGG" id="ckr:CKR_0204"/>
<dbReference type="HOGENOM" id="CLU_032354_1_2_9"/>
<dbReference type="UniPathway" id="UPA00588">
    <property type="reaction ID" value="UER00649"/>
</dbReference>
<dbReference type="Proteomes" id="UP000007969">
    <property type="component" value="Chromosome"/>
</dbReference>
<dbReference type="GO" id="GO:0005737">
    <property type="term" value="C:cytoplasm"/>
    <property type="evidence" value="ECO:0007669"/>
    <property type="project" value="UniProtKB-SubCell"/>
</dbReference>
<dbReference type="GO" id="GO:0004017">
    <property type="term" value="F:adenylate kinase activity"/>
    <property type="evidence" value="ECO:0007669"/>
    <property type="project" value="UniProtKB-UniRule"/>
</dbReference>
<dbReference type="GO" id="GO:0005524">
    <property type="term" value="F:ATP binding"/>
    <property type="evidence" value="ECO:0007669"/>
    <property type="project" value="UniProtKB-UniRule"/>
</dbReference>
<dbReference type="GO" id="GO:0008270">
    <property type="term" value="F:zinc ion binding"/>
    <property type="evidence" value="ECO:0007669"/>
    <property type="project" value="UniProtKB-UniRule"/>
</dbReference>
<dbReference type="GO" id="GO:0044209">
    <property type="term" value="P:AMP salvage"/>
    <property type="evidence" value="ECO:0007669"/>
    <property type="project" value="UniProtKB-UniRule"/>
</dbReference>
<dbReference type="CDD" id="cd01428">
    <property type="entry name" value="ADK"/>
    <property type="match status" value="1"/>
</dbReference>
<dbReference type="FunFam" id="3.40.50.300:FF:000106">
    <property type="entry name" value="Adenylate kinase mitochondrial"/>
    <property type="match status" value="1"/>
</dbReference>
<dbReference type="Gene3D" id="3.40.50.300">
    <property type="entry name" value="P-loop containing nucleotide triphosphate hydrolases"/>
    <property type="match status" value="1"/>
</dbReference>
<dbReference type="HAMAP" id="MF_00235">
    <property type="entry name" value="Adenylate_kinase_Adk"/>
    <property type="match status" value="1"/>
</dbReference>
<dbReference type="InterPro" id="IPR006259">
    <property type="entry name" value="Adenyl_kin_sub"/>
</dbReference>
<dbReference type="InterPro" id="IPR000850">
    <property type="entry name" value="Adenylat/UMP-CMP_kin"/>
</dbReference>
<dbReference type="InterPro" id="IPR033690">
    <property type="entry name" value="Adenylat_kinase_CS"/>
</dbReference>
<dbReference type="InterPro" id="IPR007862">
    <property type="entry name" value="Adenylate_kinase_lid-dom"/>
</dbReference>
<dbReference type="InterPro" id="IPR027417">
    <property type="entry name" value="P-loop_NTPase"/>
</dbReference>
<dbReference type="NCBIfam" id="TIGR01351">
    <property type="entry name" value="adk"/>
    <property type="match status" value="1"/>
</dbReference>
<dbReference type="NCBIfam" id="NF001379">
    <property type="entry name" value="PRK00279.1-1"/>
    <property type="match status" value="1"/>
</dbReference>
<dbReference type="NCBIfam" id="NF001380">
    <property type="entry name" value="PRK00279.1-2"/>
    <property type="match status" value="1"/>
</dbReference>
<dbReference type="NCBIfam" id="NF001381">
    <property type="entry name" value="PRK00279.1-3"/>
    <property type="match status" value="1"/>
</dbReference>
<dbReference type="NCBIfam" id="NF011100">
    <property type="entry name" value="PRK14527.1"/>
    <property type="match status" value="1"/>
</dbReference>
<dbReference type="PANTHER" id="PTHR23359">
    <property type="entry name" value="NUCLEOTIDE KINASE"/>
    <property type="match status" value="1"/>
</dbReference>
<dbReference type="Pfam" id="PF00406">
    <property type="entry name" value="ADK"/>
    <property type="match status" value="1"/>
</dbReference>
<dbReference type="Pfam" id="PF05191">
    <property type="entry name" value="ADK_lid"/>
    <property type="match status" value="1"/>
</dbReference>
<dbReference type="PRINTS" id="PR00094">
    <property type="entry name" value="ADENYLTKNASE"/>
</dbReference>
<dbReference type="SUPFAM" id="SSF52540">
    <property type="entry name" value="P-loop containing nucleoside triphosphate hydrolases"/>
    <property type="match status" value="1"/>
</dbReference>
<dbReference type="PROSITE" id="PS00113">
    <property type="entry name" value="ADENYLATE_KINASE"/>
    <property type="match status" value="1"/>
</dbReference>